<gene>
    <name type="primary">GSM1</name>
    <name type="ORF">C1Q_02798</name>
</gene>
<evidence type="ECO:0000250" key="1"/>
<evidence type="ECO:0000255" key="2">
    <source>
        <dbReference type="PROSITE-ProRule" id="PRU00227"/>
    </source>
</evidence>
<evidence type="ECO:0000256" key="3">
    <source>
        <dbReference type="SAM" id="MobiDB-lite"/>
    </source>
</evidence>
<evidence type="ECO:0000305" key="4"/>
<keyword id="KW-0238">DNA-binding</keyword>
<keyword id="KW-0479">Metal-binding</keyword>
<keyword id="KW-0539">Nucleus</keyword>
<keyword id="KW-0804">Transcription</keyword>
<keyword id="KW-0805">Transcription regulation</keyword>
<keyword id="KW-0862">Zinc</keyword>
<feature type="chain" id="PRO_0000406493" description="Glucose starvation modulator protein 1">
    <location>
        <begin position="1"/>
        <end position="618"/>
    </location>
</feature>
<feature type="domain" description="PAS">
    <location>
        <begin position="466"/>
        <end position="538"/>
    </location>
</feature>
<feature type="DNA-binding region" description="Zn(2)-C6 fungal-type" evidence="2">
    <location>
        <begin position="20"/>
        <end position="48"/>
    </location>
</feature>
<feature type="region of interest" description="Disordered" evidence="3">
    <location>
        <begin position="325"/>
        <end position="353"/>
    </location>
</feature>
<feature type="compositionally biased region" description="Basic and acidic residues" evidence="3">
    <location>
        <begin position="335"/>
        <end position="353"/>
    </location>
</feature>
<name>GSM1_YEAS2</name>
<accession>C7GR11</accession>
<protein>
    <recommendedName>
        <fullName>Glucose starvation modulator protein 1</fullName>
    </recommendedName>
</protein>
<proteinExistence type="inferred from homology"/>
<sequence>MTKKLPSELKQTRKSIQTACEFCHTKHIQCDVGRPCQNCLKRNIGKFCRDKKRKSRKRIEKHGTQPYLNLGKRLVIHDVPSKTVSPSSVHLQRDFLSSDQEKPGKTPAHNTNIQYTYNINDNFQSAGSIPRITNFNTNNGQTVLENTSNNISASQAVHLMNDPIIPTVRKSTLNLKSHFLEQHKAMQQPLATNCLVATSNVPVHSGMDDSNKSDDDVDDETNIHFDSMWCNDEYMKLKDIVDISTPFLPNNSQIFSLQESEYPNPSASTRGNSSLHLTNLLNSTKSVNDQKDSSIGHSTSTFNTYDEVVSRPFISLDMLHLNRGANANTQPSHNAKLESECDSSSHSDADLEKHDTDFISPSKFRELVKTPQDLYDNKCLIKLHNYKLAYTKLLTTLRKKFLEGAEIDKSASVKDEHSTQKHNLRYDLEVIIRSILERYAPIFISLTSNMIEEDLLLQEVTLQRALLDLENMAKLVSCTPMCIWRRSGEICFVSNEFYSLTGFNKNLLLDRTSFIFEYLDHKSVSNYFQIFNELLAFGYNDINKRKKLLMLNACSSTSSKITEGFSFTTDGKAIFTKCNLLLSNGLYLKCACCWTVKRDSFNIPILVMGQFLPIFEMD</sequence>
<comment type="function">
    <text evidence="1">Transcription factor which regulates nonfermentable carbon utilization. Binds specifically to 5'-CGGN(8)CGG-3' and 5'-CGGN(9)CGG-3' sequences in the promoter region (By similarity).</text>
</comment>
<comment type="subcellular location">
    <subcellularLocation>
        <location evidence="2">Nucleus</location>
    </subcellularLocation>
</comment>
<comment type="similarity">
    <text evidence="4">Belongs to the ERT1/acuK family.</text>
</comment>
<organism>
    <name type="scientific">Saccharomyces cerevisiae (strain JAY291)</name>
    <name type="common">Baker's yeast</name>
    <dbReference type="NCBI Taxonomy" id="574961"/>
    <lineage>
        <taxon>Eukaryota</taxon>
        <taxon>Fungi</taxon>
        <taxon>Dikarya</taxon>
        <taxon>Ascomycota</taxon>
        <taxon>Saccharomycotina</taxon>
        <taxon>Saccharomycetes</taxon>
        <taxon>Saccharomycetales</taxon>
        <taxon>Saccharomycetaceae</taxon>
        <taxon>Saccharomyces</taxon>
    </lineage>
</organism>
<dbReference type="EMBL" id="ACFL01000138">
    <property type="protein sequence ID" value="EEU06736.1"/>
    <property type="molecule type" value="Genomic_DNA"/>
</dbReference>
<dbReference type="OrthoDB" id="33448at4893"/>
<dbReference type="Proteomes" id="UP000008073">
    <property type="component" value="Unassembled WGS sequence"/>
</dbReference>
<dbReference type="GO" id="GO:0005634">
    <property type="term" value="C:nucleus"/>
    <property type="evidence" value="ECO:0007669"/>
    <property type="project" value="UniProtKB-SubCell"/>
</dbReference>
<dbReference type="GO" id="GO:0000981">
    <property type="term" value="F:DNA-binding transcription factor activity, RNA polymerase II-specific"/>
    <property type="evidence" value="ECO:0007669"/>
    <property type="project" value="InterPro"/>
</dbReference>
<dbReference type="GO" id="GO:0000977">
    <property type="term" value="F:RNA polymerase II transcription regulatory region sequence-specific DNA binding"/>
    <property type="evidence" value="ECO:0007669"/>
    <property type="project" value="TreeGrafter"/>
</dbReference>
<dbReference type="GO" id="GO:0008270">
    <property type="term" value="F:zinc ion binding"/>
    <property type="evidence" value="ECO:0007669"/>
    <property type="project" value="InterPro"/>
</dbReference>
<dbReference type="GO" id="GO:0009267">
    <property type="term" value="P:cellular response to starvation"/>
    <property type="evidence" value="ECO:0007669"/>
    <property type="project" value="TreeGrafter"/>
</dbReference>
<dbReference type="CDD" id="cd00067">
    <property type="entry name" value="GAL4"/>
    <property type="match status" value="1"/>
</dbReference>
<dbReference type="Gene3D" id="4.10.240.10">
    <property type="entry name" value="Zn(2)-C6 fungal-type DNA-binding domain"/>
    <property type="match status" value="1"/>
</dbReference>
<dbReference type="InterPro" id="IPR050335">
    <property type="entry name" value="ERT1_acuK_gluconeogen_tf"/>
</dbReference>
<dbReference type="InterPro" id="IPR056751">
    <property type="entry name" value="PAS_13"/>
</dbReference>
<dbReference type="InterPro" id="IPR036864">
    <property type="entry name" value="Zn2-C6_fun-type_DNA-bd_sf"/>
</dbReference>
<dbReference type="InterPro" id="IPR001138">
    <property type="entry name" value="Zn2Cys6_DnaBD"/>
</dbReference>
<dbReference type="PANTHER" id="PTHR47659:SF8">
    <property type="entry name" value="GLUCOSE STARVATION MODULATOR PROTEIN 1"/>
    <property type="match status" value="1"/>
</dbReference>
<dbReference type="PANTHER" id="PTHR47659">
    <property type="entry name" value="ZN(II)2CYS6 TRANSCRIPTION FACTOR (EUROFUNG)-RELATED"/>
    <property type="match status" value="1"/>
</dbReference>
<dbReference type="Pfam" id="PF24990">
    <property type="entry name" value="PAS_13"/>
    <property type="match status" value="1"/>
</dbReference>
<dbReference type="Pfam" id="PF00172">
    <property type="entry name" value="Zn_clus"/>
    <property type="match status" value="1"/>
</dbReference>
<dbReference type="SMART" id="SM00066">
    <property type="entry name" value="GAL4"/>
    <property type="match status" value="1"/>
</dbReference>
<dbReference type="SUPFAM" id="SSF57701">
    <property type="entry name" value="Zn2/Cys6 DNA-binding domain"/>
    <property type="match status" value="1"/>
</dbReference>
<dbReference type="PROSITE" id="PS00463">
    <property type="entry name" value="ZN2_CY6_FUNGAL_1"/>
    <property type="match status" value="1"/>
</dbReference>
<dbReference type="PROSITE" id="PS50048">
    <property type="entry name" value="ZN2_CY6_FUNGAL_2"/>
    <property type="match status" value="1"/>
</dbReference>
<reference key="1">
    <citation type="journal article" date="2009" name="Genome Res.">
        <title>Genome structure of a Saccharomyces cerevisiae strain widely used in bioethanol production.</title>
        <authorList>
            <person name="Argueso J.L."/>
            <person name="Carazzolle M.F."/>
            <person name="Mieczkowski P.A."/>
            <person name="Duarte F.M."/>
            <person name="Netto O.V.C."/>
            <person name="Missawa S.K."/>
            <person name="Galzerani F."/>
            <person name="Costa G.G.L."/>
            <person name="Vidal R.O."/>
            <person name="Noronha M.F."/>
            <person name="Dominska M."/>
            <person name="Andrietta M.G.S."/>
            <person name="Andrietta S.R."/>
            <person name="Cunha A.F."/>
            <person name="Gomes L.H."/>
            <person name="Tavares F.C.A."/>
            <person name="Alcarde A.R."/>
            <person name="Dietrich F.S."/>
            <person name="McCusker J.H."/>
            <person name="Petes T.D."/>
            <person name="Pereira G.A.G."/>
        </authorList>
    </citation>
    <scope>NUCLEOTIDE SEQUENCE [LARGE SCALE GENOMIC DNA]</scope>
    <source>
        <strain>JAY291</strain>
    </source>
</reference>